<accession>P16716</accession>
<reference key="1">
    <citation type="journal article" date="1989" name="J. Virol.">
        <title>A comparison of the genome organization of capripoxvirus with that of the orthopoxviruses.</title>
        <authorList>
            <person name="Gershon P.D."/>
            <person name="Ansell D.M."/>
            <person name="Black D.N."/>
        </authorList>
    </citation>
    <scope>NUCLEOTIDE SEQUENCE [GENOMIC DNA]</scope>
</reference>
<comment type="function">
    <text evidence="1">Part of the DNA-dependent RNA polymerase which catalyzes the transcription of viral DNA into RNA using the four ribonucleoside triphosphates as substrates. Responsible for the transcription of early, intermediate and late genes. DNA-dependent RNA polymerase associates with the early transcription factor (ETF), itself composed of D6 and A7, thereby allowing the early genes transcription. Late transcription, and probably also intermediate transcription, require newly synthesized RNA polymerase (By similarity).</text>
</comment>
<comment type="catalytic activity">
    <reaction>
        <text>RNA(n) + a ribonucleoside 5'-triphosphate = RNA(n+1) + diphosphate</text>
        <dbReference type="Rhea" id="RHEA:21248"/>
        <dbReference type="Rhea" id="RHEA-COMP:14527"/>
        <dbReference type="Rhea" id="RHEA-COMP:17342"/>
        <dbReference type="ChEBI" id="CHEBI:33019"/>
        <dbReference type="ChEBI" id="CHEBI:61557"/>
        <dbReference type="ChEBI" id="CHEBI:140395"/>
        <dbReference type="EC" id="2.7.7.6"/>
    </reaction>
</comment>
<comment type="subunit">
    <text evidence="1">The DNA-dependent RNA polymerase used for intermediate and late genes expression consists of eight subunits (147) kDa, (133) kDa, (35) kDa, (30) kDa, (22) kDa, (19) kDa, (18) kDa and (7) kDa totalling more than 500 kDa in mass. The same holoenzyme, with the addition of the transcription-specificity factor RAP94, is used for early gene expression (By similarity).</text>
</comment>
<comment type="subcellular location">
    <subcellularLocation>
        <location evidence="1">Virion</location>
    </subcellularLocation>
    <text evidence="1">All the enzymes and other proteins required to synthesize early mRNAs are packaged within the virion core along with the DNA genome. This is necessary because viral early mRNAs are synthesized within minutes after virus entry into the cell and are extruded through pores in the core particle (By similarity).</text>
</comment>
<comment type="similarity">
    <text evidence="2">Belongs to the RNA polymerase beta chain family.</text>
</comment>
<dbReference type="EC" id="2.7.7.6"/>
<dbReference type="EMBL" id="M30039">
    <property type="protein sequence ID" value="AAC32897.1"/>
    <property type="molecule type" value="Genomic_DNA"/>
</dbReference>
<dbReference type="PIR" id="A33325">
    <property type="entry name" value="RNVZCA"/>
</dbReference>
<dbReference type="SMR" id="P16716"/>
<dbReference type="GO" id="GO:0000428">
    <property type="term" value="C:DNA-directed RNA polymerase complex"/>
    <property type="evidence" value="ECO:0007669"/>
    <property type="project" value="UniProtKB-KW"/>
</dbReference>
<dbReference type="GO" id="GO:0044423">
    <property type="term" value="C:virion component"/>
    <property type="evidence" value="ECO:0007669"/>
    <property type="project" value="UniProtKB-KW"/>
</dbReference>
<dbReference type="GO" id="GO:0003677">
    <property type="term" value="F:DNA binding"/>
    <property type="evidence" value="ECO:0007669"/>
    <property type="project" value="InterPro"/>
</dbReference>
<dbReference type="GO" id="GO:0003899">
    <property type="term" value="F:DNA-directed RNA polymerase activity"/>
    <property type="evidence" value="ECO:0007669"/>
    <property type="project" value="UniProtKB-EC"/>
</dbReference>
<dbReference type="GO" id="GO:0046872">
    <property type="term" value="F:metal ion binding"/>
    <property type="evidence" value="ECO:0007669"/>
    <property type="project" value="UniProtKB-KW"/>
</dbReference>
<dbReference type="GO" id="GO:0032549">
    <property type="term" value="F:ribonucleoside binding"/>
    <property type="evidence" value="ECO:0007669"/>
    <property type="project" value="InterPro"/>
</dbReference>
<dbReference type="GO" id="GO:0006351">
    <property type="term" value="P:DNA-templated transcription"/>
    <property type="evidence" value="ECO:0007669"/>
    <property type="project" value="InterPro"/>
</dbReference>
<dbReference type="Gene3D" id="2.40.50.150">
    <property type="match status" value="1"/>
</dbReference>
<dbReference type="Gene3D" id="3.90.1100.10">
    <property type="match status" value="1"/>
</dbReference>
<dbReference type="Gene3D" id="2.40.270.10">
    <property type="entry name" value="DNA-directed RNA polymerase, subunit 2, domain 6"/>
    <property type="match status" value="1"/>
</dbReference>
<dbReference type="Gene3D" id="3.90.1800.10">
    <property type="entry name" value="RNA polymerase alpha subunit dimerisation domain"/>
    <property type="match status" value="1"/>
</dbReference>
<dbReference type="InterPro" id="IPR015712">
    <property type="entry name" value="DNA-dir_RNA_pol_su2"/>
</dbReference>
<dbReference type="InterPro" id="IPR007120">
    <property type="entry name" value="DNA-dir_RNAP_su2_dom"/>
</dbReference>
<dbReference type="InterPro" id="IPR037033">
    <property type="entry name" value="DNA-dir_RNAP_su2_hyb_sf"/>
</dbReference>
<dbReference type="InterPro" id="IPR024390">
    <property type="entry name" value="RNA_pol_132_poxvirus"/>
</dbReference>
<dbReference type="InterPro" id="IPR007121">
    <property type="entry name" value="RNA_pol_bsu_CS"/>
</dbReference>
<dbReference type="InterPro" id="IPR007645">
    <property type="entry name" value="RNA_pol_Rpb2_3"/>
</dbReference>
<dbReference type="InterPro" id="IPR007647">
    <property type="entry name" value="RNA_pol_Rpb2_5"/>
</dbReference>
<dbReference type="InterPro" id="IPR007641">
    <property type="entry name" value="RNA_pol_Rpb2_7"/>
</dbReference>
<dbReference type="InterPro" id="IPR014724">
    <property type="entry name" value="RNA_pol_RPB2_OB-fold"/>
</dbReference>
<dbReference type="PANTHER" id="PTHR20856">
    <property type="entry name" value="DNA-DIRECTED RNA POLYMERASE I SUBUNIT 2"/>
    <property type="match status" value="1"/>
</dbReference>
<dbReference type="Pfam" id="PF04565">
    <property type="entry name" value="RNA_pol_Rpb2_3"/>
    <property type="match status" value="1"/>
</dbReference>
<dbReference type="Pfam" id="PF04567">
    <property type="entry name" value="RNA_pol_Rpb2_5"/>
    <property type="match status" value="1"/>
</dbReference>
<dbReference type="Pfam" id="PF00562">
    <property type="entry name" value="RNA_pol_Rpb2_6"/>
    <property type="match status" value="1"/>
</dbReference>
<dbReference type="Pfam" id="PF04560">
    <property type="entry name" value="RNA_pol_Rpb2_7"/>
    <property type="match status" value="1"/>
</dbReference>
<dbReference type="Pfam" id="PF12415">
    <property type="entry name" value="rpo132"/>
    <property type="match status" value="1"/>
</dbReference>
<dbReference type="SUPFAM" id="SSF64484">
    <property type="entry name" value="beta and beta-prime subunits of DNA dependent RNA-polymerase"/>
    <property type="match status" value="1"/>
</dbReference>
<dbReference type="PROSITE" id="PS01166">
    <property type="entry name" value="RNA_POL_BETA"/>
    <property type="match status" value="1"/>
</dbReference>
<sequence>SFIKHSLSYDMPSEISYLVNTIIESTKELIKTINDFDIDTYINDLIISEYNKQKSQLILEEFKHEMINNFLPHMNDTPNQLKGFYIMSLLRKFIYCIYYTSRYPDRDSMVCHRVLTYGKYFEILAHDELENYIGNIRTDIINNHKNRGTYSVNIHVLTTPGFNHAFSGLLSGKFKKTDGSYRTHSHYSWMQNISIPRSVGYYPDQVKISKMFSVRKYHPSQYAYFCPSDVPERGPQVGLVSQLSVLTSITNICTNEYLELEKKICNYIRSYNHNDISYFETGYYITLENSLIACLNPNLVDDFVIDFRRKKRMNYFGNLEIGITLVNDHMNEIRINIGGGRLIRPFLVIDNGNLIMDEIFSELEFKIDDMTFSDIQKEFPHVIEIVDIEQFTFSNVCESVQKFRALPKSEKCKYHLCDFPAEFKDGYVASSLVGINHNSGPRAILGCAQRKQAISCLSSDIRNKIDNGIHLIYPERPIVISKALETSKIAVNCFGQHVTIALMSYKGINQEDGIIIKKQFVERGGLDIITAKKHQVEIPLENFNNKERVKSTAYSKLESNGLVRLNAFLESGDAIARNISSRTLEDDFVQDNQISFDISDRYTDMYQSRVERVQVDLTDKVKVRVLTMKERRPVLGDKFTSRTSQKGTVAYIADETELPYDENGIKPDVIINSTSIFSRKTVSMLIEVILTSAYEVSPYNNDGQNRPICFPSSNETSIDTYLDFAKRCHRDRYPSLSDDDINDKMFCDTILYDPETDKPYSSKIFMGPIYYLRLRHLTQDKATVRCRGKKTKLIRQANEGRRRGGGIKFGEMERDCLIAHGAANTITEVLKDSEEDYQDVYVCENCGDITAQIQGNKVCIRCSKQNLSTILTKVDTTHVAKVFITQMNARGVKVKLEFEKRNPLFYKPLDVVDLSPNFL</sequence>
<proteinExistence type="inferred from homology"/>
<organism>
    <name type="scientific">Sheeppox virus (strain KS-1)</name>
    <name type="common">SPPV</name>
    <name type="synonym">Capripoxvirus (strain KS-1)</name>
    <dbReference type="NCBI Taxonomy" id="10269"/>
    <lineage>
        <taxon>Viruses</taxon>
        <taxon>Varidnaviria</taxon>
        <taxon>Bamfordvirae</taxon>
        <taxon>Nucleocytoviricota</taxon>
        <taxon>Pokkesviricetes</taxon>
        <taxon>Chitovirales</taxon>
        <taxon>Poxviridae</taxon>
        <taxon>Chordopoxvirinae</taxon>
        <taxon>Capripoxvirus</taxon>
        <taxon>Sheeppox virus</taxon>
    </lineage>
</organism>
<name>RP132_SHEVK</name>
<gene>
    <name type="primary">RPO132</name>
</gene>
<evidence type="ECO:0000250" key="1"/>
<evidence type="ECO:0000305" key="2"/>
<organismHost>
    <name type="scientific">Ovis aries</name>
    <name type="common">Sheep</name>
    <dbReference type="NCBI Taxonomy" id="9940"/>
</organismHost>
<keyword id="KW-0240">DNA-directed RNA polymerase</keyword>
<keyword id="KW-0479">Metal-binding</keyword>
<keyword id="KW-0548">Nucleotidyltransferase</keyword>
<keyword id="KW-0804">Transcription</keyword>
<keyword id="KW-0808">Transferase</keyword>
<keyword id="KW-0946">Virion</keyword>
<protein>
    <recommendedName>
        <fullName>DNA-directed RNA polymerase 132 kDa polypeptide</fullName>
        <ecNumber>2.7.7.6</ecNumber>
    </recommendedName>
    <alternativeName>
        <fullName>HM1 protein</fullName>
    </alternativeName>
</protein>
<feature type="chain" id="PRO_0000048065" description="DNA-directed RNA polymerase 132 kDa polypeptide">
    <location>
        <begin position="1" status="less than"/>
        <end position="919"/>
    </location>
</feature>
<feature type="non-terminal residue">
    <location>
        <position position="1"/>
    </location>
</feature>